<accession>P68434</accession>
<accession>A0A1R3XZE0</accession>
<accession>Q50619</accession>
<accession>X2BJ51</accession>
<sequence>MRDPVLFAIPCFLLLLILEWTAARKLESIETAATGQPRPASGAYLTRDSVASISMGLVSIATTAGWKSLALLGYAAIYAYLAPWQLSAHRWYTWVIAIVGVDLLYYSYHRIAHRVRLIWATHQAHHSSEYFNFATALRQKWNNSGEILMWVPLPLMGLPPWMVFCSWSLNLIYQFWVHTERIDRLPRWFEFVFNTPSHHRVHHGMDPVYLDKNYGGILIIWDRLFGSFQPELFRPHYGLTKRVDTFNIWKLQTREYVAIVRDWRSATRLRDRLGYVFGPPGWEPRTIDKSNAAASLVTSR</sequence>
<feature type="chain" id="PRO_0000117040" description="C-5 sterol desaturase">
    <location>
        <begin position="1"/>
        <end position="300"/>
    </location>
</feature>
<feature type="transmembrane region" description="Helical" evidence="1">
    <location>
        <begin position="3"/>
        <end position="23"/>
    </location>
</feature>
<feature type="transmembrane region" description="Helical" evidence="1">
    <location>
        <begin position="68"/>
        <end position="88"/>
    </location>
</feature>
<feature type="transmembrane region" description="Helical" evidence="1">
    <location>
        <begin position="91"/>
        <end position="111"/>
    </location>
</feature>
<feature type="transmembrane region" description="Helical" evidence="1">
    <location>
        <begin position="147"/>
        <end position="167"/>
    </location>
</feature>
<feature type="domain" description="Fatty acid hydroxylase" evidence="1">
    <location>
        <begin position="94"/>
        <end position="227"/>
    </location>
</feature>
<protein>
    <recommendedName>
        <fullName>C-5 sterol desaturase</fullName>
        <ecNumber>1.3.-.-</ecNumber>
    </recommendedName>
    <alternativeName>
        <fullName>Sterol-C5-desaturase</fullName>
    </alternativeName>
</protein>
<organism>
    <name type="scientific">Mycobacterium bovis (strain ATCC BAA-935 / AF2122/97)</name>
    <dbReference type="NCBI Taxonomy" id="233413"/>
    <lineage>
        <taxon>Bacteria</taxon>
        <taxon>Bacillati</taxon>
        <taxon>Actinomycetota</taxon>
        <taxon>Actinomycetes</taxon>
        <taxon>Mycobacteriales</taxon>
        <taxon>Mycobacteriaceae</taxon>
        <taxon>Mycobacterium</taxon>
        <taxon>Mycobacterium tuberculosis complex</taxon>
    </lineage>
</organism>
<reference key="1">
    <citation type="submission" date="2000-06" db="EMBL/GenBank/DDBJ databases">
        <title>Characterization of a sterol delta 5,6-desaturase homolog in Mycobacterium bovis (BCG).</title>
        <authorList>
            <person name="Jackson C.J."/>
            <person name="Lamb D.C."/>
            <person name="Kelly D.E."/>
            <person name="Kelly S.L."/>
        </authorList>
    </citation>
    <scope>NUCLEOTIDE SEQUENCE [GENOMIC DNA]</scope>
    <source>
        <strain>BCG</strain>
    </source>
</reference>
<reference key="2">
    <citation type="journal article" date="2003" name="Proc. Natl. Acad. Sci. U.S.A.">
        <title>The complete genome sequence of Mycobacterium bovis.</title>
        <authorList>
            <person name="Garnier T."/>
            <person name="Eiglmeier K."/>
            <person name="Camus J.-C."/>
            <person name="Medina N."/>
            <person name="Mansoor H."/>
            <person name="Pryor M."/>
            <person name="Duthoy S."/>
            <person name="Grondin S."/>
            <person name="Lacroix C."/>
            <person name="Monsempe C."/>
            <person name="Simon S."/>
            <person name="Harris B."/>
            <person name="Atkin R."/>
            <person name="Doggett J."/>
            <person name="Mayes R."/>
            <person name="Keating L."/>
            <person name="Wheeler P.R."/>
            <person name="Parkhill J."/>
            <person name="Barrell B.G."/>
            <person name="Cole S.T."/>
            <person name="Gordon S.V."/>
            <person name="Hewinson R.G."/>
        </authorList>
    </citation>
    <scope>NUCLEOTIDE SEQUENCE [LARGE SCALE GENOMIC DNA]</scope>
    <source>
        <strain>ATCC BAA-935 / AF2122/97</strain>
    </source>
</reference>
<reference key="3">
    <citation type="journal article" date="2017" name="Genome Announc.">
        <title>Updated reference genome sequence and annotation of Mycobacterium bovis AF2122/97.</title>
        <authorList>
            <person name="Malone K.M."/>
            <person name="Farrell D."/>
            <person name="Stuber T.P."/>
            <person name="Schubert O.T."/>
            <person name="Aebersold R."/>
            <person name="Robbe-Austerman S."/>
            <person name="Gordon S.V."/>
        </authorList>
    </citation>
    <scope>NUCLEOTIDE SEQUENCE [LARGE SCALE GENOMIC DNA]</scope>
    <scope>GENOME REANNOTATION</scope>
    <source>
        <strain>ATCC BAA-935 / AF2122/97</strain>
    </source>
</reference>
<name>ERG3_MYCBO</name>
<proteinExistence type="inferred from homology"/>
<comment type="subcellular location">
    <subcellularLocation>
        <location evidence="2">Cell membrane</location>
        <topology evidence="2">Multi-pass membrane protein</topology>
    </subcellularLocation>
</comment>
<comment type="similarity">
    <text evidence="2">Belongs to the sterol desaturase family.</text>
</comment>
<evidence type="ECO:0000255" key="1"/>
<evidence type="ECO:0000305" key="2"/>
<keyword id="KW-1003">Cell membrane</keyword>
<keyword id="KW-0444">Lipid biosynthesis</keyword>
<keyword id="KW-0443">Lipid metabolism</keyword>
<keyword id="KW-0472">Membrane</keyword>
<keyword id="KW-0560">Oxidoreductase</keyword>
<keyword id="KW-1185">Reference proteome</keyword>
<keyword id="KW-0752">Steroid biosynthesis</keyword>
<keyword id="KW-0753">Steroid metabolism</keyword>
<keyword id="KW-0756">Sterol biosynthesis</keyword>
<keyword id="KW-1207">Sterol metabolism</keyword>
<keyword id="KW-0812">Transmembrane</keyword>
<keyword id="KW-1133">Transmembrane helix</keyword>
<gene>
    <name type="primary">erg3</name>
    <name type="ordered locus">BQ2027_MB1844</name>
</gene>
<dbReference type="EC" id="1.3.-.-"/>
<dbReference type="EMBL" id="AF283500">
    <property type="protein sequence ID" value="AAG10160.1"/>
    <property type="molecule type" value="Genomic_DNA"/>
</dbReference>
<dbReference type="EMBL" id="LT708304">
    <property type="protein sequence ID" value="SIU00448.1"/>
    <property type="molecule type" value="Genomic_DNA"/>
</dbReference>
<dbReference type="RefSeq" id="NP_855496.1">
    <property type="nucleotide sequence ID" value="NC_002945.3"/>
</dbReference>
<dbReference type="KEGG" id="mbo:BQ2027_MB1844"/>
<dbReference type="PATRIC" id="fig|233413.5.peg.2025"/>
<dbReference type="Proteomes" id="UP000001419">
    <property type="component" value="Chromosome"/>
</dbReference>
<dbReference type="GO" id="GO:0005886">
    <property type="term" value="C:plasma membrane"/>
    <property type="evidence" value="ECO:0007669"/>
    <property type="project" value="UniProtKB-SubCell"/>
</dbReference>
<dbReference type="GO" id="GO:0050479">
    <property type="term" value="F:glyceryl-ether monooxygenase activity"/>
    <property type="evidence" value="ECO:0007669"/>
    <property type="project" value="TreeGrafter"/>
</dbReference>
<dbReference type="GO" id="GO:0005506">
    <property type="term" value="F:iron ion binding"/>
    <property type="evidence" value="ECO:0007669"/>
    <property type="project" value="InterPro"/>
</dbReference>
<dbReference type="GO" id="GO:0006643">
    <property type="term" value="P:membrane lipid metabolic process"/>
    <property type="evidence" value="ECO:0007669"/>
    <property type="project" value="TreeGrafter"/>
</dbReference>
<dbReference type="GO" id="GO:0016126">
    <property type="term" value="P:sterol biosynthetic process"/>
    <property type="evidence" value="ECO:0007669"/>
    <property type="project" value="UniProtKB-KW"/>
</dbReference>
<dbReference type="InterPro" id="IPR006694">
    <property type="entry name" value="Fatty_acid_hydroxylase"/>
</dbReference>
<dbReference type="InterPro" id="IPR051689">
    <property type="entry name" value="Sterol_desaturase/TMEM195"/>
</dbReference>
<dbReference type="PANTHER" id="PTHR21624:SF1">
    <property type="entry name" value="ALKYLGLYCEROL MONOOXYGENASE"/>
    <property type="match status" value="1"/>
</dbReference>
<dbReference type="PANTHER" id="PTHR21624">
    <property type="entry name" value="STEROL DESATURASE-RELATED PROTEIN"/>
    <property type="match status" value="1"/>
</dbReference>
<dbReference type="Pfam" id="PF04116">
    <property type="entry name" value="FA_hydroxylase"/>
    <property type="match status" value="1"/>
</dbReference>